<gene>
    <name evidence="2" type="primary">HtrA2</name>
    <name type="ORF">GJ24448</name>
</gene>
<keyword id="KW-0053">Apoptosis</keyword>
<keyword id="KW-0378">Hydrolase</keyword>
<keyword id="KW-0472">Membrane</keyword>
<keyword id="KW-0496">Mitochondrion</keyword>
<keyword id="KW-0645">Protease</keyword>
<keyword id="KW-1185">Reference proteome</keyword>
<keyword id="KW-0720">Serine protease</keyword>
<keyword id="KW-0809">Transit peptide</keyword>
<keyword id="KW-0812">Transmembrane</keyword>
<keyword id="KW-1133">Transmembrane helix</keyword>
<keyword id="KW-0865">Zymogen</keyword>
<proteinExistence type="inferred from homology"/>
<sequence length="421" mass="45903">MALRSINKLEVFLKRYSAPTLYYCSNKSAHGATNGIGTDDSNNNYNNNNKNKNGYTGFSWRSVIRFFVPFSLGALASTMVAQREELTPTISARALSGRRREFNFIADVVAGCADSVVYIEIKDTRHFDYFSGQPITASNGSGFVIEQNGLILTNAHVVINKPNTMVQVRLSDGRTFPATIEDVDQTSDLATLRIQVNNLSVMKLGKSSTLRSGEWVVALGSPLALSNTVTAGVISSTQRASQELGLRNRDINYLQTDAAITFGNSGGPLVNLDGEAIGVNSMKVTAGISFAIPIDYVKVFLERAAARRRKGSAYKTGYPVKRYMGITMLTLTPDILFELKSRTQNMPNTLSHGVLVWKVIVGSPAHSGGLQPGDIVTHINKKEIKNSSDVYDALADGKKELDIVILRGVKQMRVTITPEDP</sequence>
<reference evidence="5" key="1">
    <citation type="journal article" date="2007" name="Nature">
        <title>Evolution of genes and genomes on the Drosophila phylogeny.</title>
        <authorList>
            <consortium name="Drosophila 12 genomes consortium"/>
        </authorList>
    </citation>
    <scope>NUCLEOTIDE SEQUENCE [LARGE SCALE GENOMIC DNA]</scope>
    <source>
        <strain evidence="5">Tucson 15010-1051.87</strain>
    </source>
</reference>
<dbReference type="EC" id="3.4.21.108"/>
<dbReference type="EMBL" id="CH940650">
    <property type="protein sequence ID" value="EDW67946.1"/>
    <property type="molecule type" value="Genomic_DNA"/>
</dbReference>
<dbReference type="RefSeq" id="XP_002054426.1">
    <property type="nucleotide sequence ID" value="XM_002054390.4"/>
</dbReference>
<dbReference type="SMR" id="B4LY58"/>
<dbReference type="FunCoup" id="B4LY58">
    <property type="interactions" value="1137"/>
</dbReference>
<dbReference type="STRING" id="7244.B4LY58"/>
<dbReference type="EnsemblMetazoa" id="FBtr0240373">
    <property type="protein sequence ID" value="FBpp0238865"/>
    <property type="gene ID" value="FBgn0211528"/>
</dbReference>
<dbReference type="EnsemblMetazoa" id="XM_002054390.3">
    <property type="protein sequence ID" value="XP_002054426.1"/>
    <property type="gene ID" value="LOC6630732"/>
</dbReference>
<dbReference type="GeneID" id="6630732"/>
<dbReference type="KEGG" id="dvi:6630732"/>
<dbReference type="CTD" id="27429"/>
<dbReference type="eggNOG" id="KOG1320">
    <property type="taxonomic scope" value="Eukaryota"/>
</dbReference>
<dbReference type="HOGENOM" id="CLU_020120_6_2_1"/>
<dbReference type="InParanoid" id="B4LY58"/>
<dbReference type="OMA" id="IMSPEGY"/>
<dbReference type="OrthoDB" id="4217619at2759"/>
<dbReference type="PhylomeDB" id="B4LY58"/>
<dbReference type="Proteomes" id="UP000008792">
    <property type="component" value="Unassembled WGS sequence"/>
</dbReference>
<dbReference type="GO" id="GO:0005829">
    <property type="term" value="C:cytosol"/>
    <property type="evidence" value="ECO:0007669"/>
    <property type="project" value="EnsemblMetazoa"/>
</dbReference>
<dbReference type="GO" id="GO:0005758">
    <property type="term" value="C:mitochondrial intermembrane space"/>
    <property type="evidence" value="ECO:0007669"/>
    <property type="project" value="UniProtKB-SubCell"/>
</dbReference>
<dbReference type="GO" id="GO:0031966">
    <property type="term" value="C:mitochondrial membrane"/>
    <property type="evidence" value="ECO:0007669"/>
    <property type="project" value="UniProtKB-SubCell"/>
</dbReference>
<dbReference type="GO" id="GO:0016006">
    <property type="term" value="C:Nebenkern"/>
    <property type="evidence" value="ECO:0007669"/>
    <property type="project" value="EnsemblMetazoa"/>
</dbReference>
<dbReference type="GO" id="GO:0004252">
    <property type="term" value="F:serine-type endopeptidase activity"/>
    <property type="evidence" value="ECO:0007669"/>
    <property type="project" value="EnsemblMetazoa"/>
</dbReference>
<dbReference type="GO" id="GO:0006915">
    <property type="term" value="P:apoptotic process"/>
    <property type="evidence" value="ECO:0007669"/>
    <property type="project" value="UniProtKB-KW"/>
</dbReference>
<dbReference type="GO" id="GO:0035234">
    <property type="term" value="P:ectopic germ cell programmed cell death"/>
    <property type="evidence" value="ECO:0007669"/>
    <property type="project" value="EnsemblMetazoa"/>
</dbReference>
<dbReference type="GO" id="GO:0007005">
    <property type="term" value="P:mitochondrion organization"/>
    <property type="evidence" value="ECO:0007669"/>
    <property type="project" value="EnsemblMetazoa"/>
</dbReference>
<dbReference type="GO" id="GO:0043065">
    <property type="term" value="P:positive regulation of apoptotic process"/>
    <property type="evidence" value="ECO:0007669"/>
    <property type="project" value="EnsemblMetazoa"/>
</dbReference>
<dbReference type="GO" id="GO:0006508">
    <property type="term" value="P:proteolysis"/>
    <property type="evidence" value="ECO:0007669"/>
    <property type="project" value="UniProtKB-KW"/>
</dbReference>
<dbReference type="GO" id="GO:0007283">
    <property type="term" value="P:spermatogenesis"/>
    <property type="evidence" value="ECO:0007669"/>
    <property type="project" value="EnsemblMetazoa"/>
</dbReference>
<dbReference type="CDD" id="cd06785">
    <property type="entry name" value="cpPDZ_HtrA-like"/>
    <property type="match status" value="1"/>
</dbReference>
<dbReference type="FunFam" id="2.40.10.120:FF:000004">
    <property type="entry name" value="Serine protease HTRA2, mitochondrial"/>
    <property type="match status" value="1"/>
</dbReference>
<dbReference type="Gene3D" id="2.30.42.10">
    <property type="match status" value="1"/>
</dbReference>
<dbReference type="Gene3D" id="2.40.10.120">
    <property type="match status" value="1"/>
</dbReference>
<dbReference type="InterPro" id="IPR001478">
    <property type="entry name" value="PDZ"/>
</dbReference>
<dbReference type="InterPro" id="IPR041489">
    <property type="entry name" value="PDZ_6"/>
</dbReference>
<dbReference type="InterPro" id="IPR036034">
    <property type="entry name" value="PDZ_sf"/>
</dbReference>
<dbReference type="InterPro" id="IPR009003">
    <property type="entry name" value="Peptidase_S1_PA"/>
</dbReference>
<dbReference type="InterPro" id="IPR001940">
    <property type="entry name" value="Peptidase_S1C"/>
</dbReference>
<dbReference type="PANTHER" id="PTHR22939">
    <property type="entry name" value="SERINE PROTEASE FAMILY S1C HTRA-RELATED"/>
    <property type="match status" value="1"/>
</dbReference>
<dbReference type="PANTHER" id="PTHR22939:SF129">
    <property type="entry name" value="SERINE PROTEASE HTRA2, MITOCHONDRIAL"/>
    <property type="match status" value="1"/>
</dbReference>
<dbReference type="Pfam" id="PF17820">
    <property type="entry name" value="PDZ_6"/>
    <property type="match status" value="1"/>
</dbReference>
<dbReference type="Pfam" id="PF13365">
    <property type="entry name" value="Trypsin_2"/>
    <property type="match status" value="1"/>
</dbReference>
<dbReference type="PRINTS" id="PR00834">
    <property type="entry name" value="PROTEASES2C"/>
</dbReference>
<dbReference type="SMART" id="SM00228">
    <property type="entry name" value="PDZ"/>
    <property type="match status" value="1"/>
</dbReference>
<dbReference type="SUPFAM" id="SSF50156">
    <property type="entry name" value="PDZ domain-like"/>
    <property type="match status" value="1"/>
</dbReference>
<dbReference type="SUPFAM" id="SSF50494">
    <property type="entry name" value="Trypsin-like serine proteases"/>
    <property type="match status" value="1"/>
</dbReference>
<dbReference type="PROSITE" id="PS50106">
    <property type="entry name" value="PDZ"/>
    <property type="match status" value="1"/>
</dbReference>
<accession>B4LY58</accession>
<evidence type="ECO:0000250" key="1">
    <source>
        <dbReference type="UniProtKB" id="O43464"/>
    </source>
</evidence>
<evidence type="ECO:0000250" key="2">
    <source>
        <dbReference type="UniProtKB" id="Q9VFJ3"/>
    </source>
</evidence>
<evidence type="ECO:0000255" key="3"/>
<evidence type="ECO:0000255" key="4">
    <source>
        <dbReference type="PROSITE-ProRule" id="PRU00143"/>
    </source>
</evidence>
<evidence type="ECO:0000312" key="5">
    <source>
        <dbReference type="EMBL" id="EDW67946.1"/>
    </source>
</evidence>
<comment type="function">
    <text evidence="2">Serine protease that shows proteolytic activity against a non-specific substrate beta-casein. Promotes or induces cell death either by direct binding to and inhibition of BIRC proteins (also called inhibitor of apoptosis proteins, IAPs), leading to an increase in caspase activity, or by a BIRC inhibition-independent, caspase-independent and serine protease activity-dependent mechanism. Can antagonize antiapoptotic activity of th/Diap1 by directly inducing the degradation of th/Diap1 (By similarity).</text>
</comment>
<comment type="catalytic activity">
    <reaction>
        <text>Cleavage of non-polar aliphatic amino-acids at the P1 position, with a preference for Val, Ile and Met. At the P2 and P3 positions, Arg is selected most strongly with a secondary preference for other hydrophilic residues.</text>
        <dbReference type="EC" id="3.4.21.108"/>
    </reaction>
</comment>
<comment type="subunit">
    <text evidence="2">Interacts with th/DIAP1 (via BIR 2 domain).</text>
</comment>
<comment type="subcellular location">
    <subcellularLocation>
        <location evidence="2">Mitochondrion intermembrane space</location>
        <topology evidence="3">Single-pass membrane protein</topology>
    </subcellularLocation>
    <subcellularLocation>
        <location evidence="2">Mitochondrion membrane</location>
        <topology evidence="3">Single-pass membrane protein</topology>
    </subcellularLocation>
    <text evidence="2">Predominantly present in the intermembrane space. Released into the cytosol following apoptotic stimuli, such as UV treatment. The extramitochondrial protein does not diffuse throughout the cytosol but stays near the mitochondria.</text>
</comment>
<comment type="similarity">
    <text evidence="3">Belongs to the peptidase S1C family.</text>
</comment>
<organism>
    <name type="scientific">Drosophila virilis</name>
    <name type="common">Fruit fly</name>
    <dbReference type="NCBI Taxonomy" id="7244"/>
    <lineage>
        <taxon>Eukaryota</taxon>
        <taxon>Metazoa</taxon>
        <taxon>Ecdysozoa</taxon>
        <taxon>Arthropoda</taxon>
        <taxon>Hexapoda</taxon>
        <taxon>Insecta</taxon>
        <taxon>Pterygota</taxon>
        <taxon>Neoptera</taxon>
        <taxon>Endopterygota</taxon>
        <taxon>Diptera</taxon>
        <taxon>Brachycera</taxon>
        <taxon>Muscomorpha</taxon>
        <taxon>Ephydroidea</taxon>
        <taxon>Drosophilidae</taxon>
        <taxon>Drosophila</taxon>
    </lineage>
</organism>
<feature type="transit peptide" description="Mitochondrion" evidence="3">
    <location>
        <begin position="1"/>
        <end status="unknown"/>
    </location>
</feature>
<feature type="propeptide" id="PRO_0000382197" evidence="3">
    <location>
        <begin status="unknown"/>
        <end position="73"/>
    </location>
</feature>
<feature type="chain" id="PRO_0000382198" description="Serine protease HTRA2, mitochondrial" evidence="2">
    <location>
        <begin position="74"/>
        <end position="421"/>
    </location>
</feature>
<feature type="transmembrane region" description="Helical" evidence="3">
    <location>
        <begin position="63"/>
        <end position="81"/>
    </location>
</feature>
<feature type="domain" description="PDZ" evidence="4">
    <location>
        <begin position="324"/>
        <end position="409"/>
    </location>
</feature>
<feature type="region of interest" description="Serine protease" evidence="3">
    <location>
        <begin position="138"/>
        <end position="301"/>
    </location>
</feature>
<feature type="short sequence motif" description="IAP-binding" evidence="3">
    <location>
        <begin position="74"/>
        <end position="77"/>
    </location>
</feature>
<feature type="active site" description="Charge relay system" evidence="1">
    <location>
        <position position="156"/>
    </location>
</feature>
<feature type="active site" description="Charge relay system" evidence="1">
    <location>
        <position position="188"/>
    </location>
</feature>
<feature type="active site" description="Charge relay system" evidence="2">
    <location>
        <position position="265"/>
    </location>
</feature>
<name>HTRA2_DROVI</name>
<protein>
    <recommendedName>
        <fullName evidence="2">Serine protease HTRA2, mitochondrial</fullName>
        <ecNumber>3.4.21.108</ecNumber>
    </recommendedName>
    <alternativeName>
        <fullName evidence="2">High temperature requirement protein A2</fullName>
    </alternativeName>
</protein>